<gene>
    <name type="primary">Hsd3b6</name>
</gene>
<dbReference type="EC" id="1.1.1.-"/>
<dbReference type="EC" id="1.1.1.145"/>
<dbReference type="EC" id="5.3.3.1"/>
<dbReference type="EMBL" id="AF031170">
    <property type="protein sequence ID" value="AAB84299.1"/>
    <property type="molecule type" value="mRNA"/>
</dbReference>
<dbReference type="EMBL" id="AK142267">
    <property type="protein sequence ID" value="BAE25002.1"/>
    <property type="molecule type" value="mRNA"/>
</dbReference>
<dbReference type="EMBL" id="AL606755">
    <property type="status" value="NOT_ANNOTATED_CDS"/>
    <property type="molecule type" value="Genomic_DNA"/>
</dbReference>
<dbReference type="EMBL" id="CH466620">
    <property type="protein sequence ID" value="EDL38971.1"/>
    <property type="molecule type" value="Genomic_DNA"/>
</dbReference>
<dbReference type="CCDS" id="CCDS17669.1"/>
<dbReference type="RefSeq" id="NP_038849.2">
    <property type="nucleotide sequence ID" value="NM_013821.3"/>
</dbReference>
<dbReference type="SMR" id="O35469"/>
<dbReference type="FunCoup" id="O35469">
    <property type="interactions" value="110"/>
</dbReference>
<dbReference type="STRING" id="10090.ENSMUSP00000029463"/>
<dbReference type="iPTMnet" id="O35469"/>
<dbReference type="PhosphoSitePlus" id="O35469"/>
<dbReference type="SwissPalm" id="O35469"/>
<dbReference type="jPOST" id="O35469"/>
<dbReference type="PaxDb" id="10090-ENSMUSP00000029463"/>
<dbReference type="PeptideAtlas" id="O35469"/>
<dbReference type="ProteomicsDB" id="285891"/>
<dbReference type="DNASU" id="15497"/>
<dbReference type="Ensembl" id="ENSMUST00000029463.13">
    <property type="protein sequence ID" value="ENSMUSP00000029463.7"/>
    <property type="gene ID" value="ENSMUSG00000027869.15"/>
</dbReference>
<dbReference type="Ensembl" id="ENSMUST00000170847.2">
    <property type="protein sequence ID" value="ENSMUSP00000129911.2"/>
    <property type="gene ID" value="ENSMUSG00000027869.15"/>
</dbReference>
<dbReference type="GeneID" id="15497"/>
<dbReference type="KEGG" id="mmu:15497"/>
<dbReference type="UCSC" id="uc012cuq.1">
    <property type="organism name" value="mouse"/>
</dbReference>
<dbReference type="AGR" id="MGI:109598"/>
<dbReference type="CTD" id="15497"/>
<dbReference type="MGI" id="MGI:109598">
    <property type="gene designation" value="Hsd3b6"/>
</dbReference>
<dbReference type="VEuPathDB" id="HostDB:ENSMUSG00000027869"/>
<dbReference type="eggNOG" id="KOG1430">
    <property type="taxonomic scope" value="Eukaryota"/>
</dbReference>
<dbReference type="GeneTree" id="ENSGT00940000155444"/>
<dbReference type="HOGENOM" id="CLU_007383_6_3_1"/>
<dbReference type="InParanoid" id="O35469"/>
<dbReference type="OMA" id="WIGFMLE"/>
<dbReference type="OrthoDB" id="1925334at2759"/>
<dbReference type="PhylomeDB" id="O35469"/>
<dbReference type="TreeFam" id="TF343138"/>
<dbReference type="BRENDA" id="1.1.1.145">
    <property type="organism ID" value="3474"/>
</dbReference>
<dbReference type="Reactome" id="R-MMU-193048">
    <property type="pathway name" value="Androgen biosynthesis"/>
</dbReference>
<dbReference type="Reactome" id="R-MMU-193993">
    <property type="pathway name" value="Mineralocorticoid biosynthesis"/>
</dbReference>
<dbReference type="Reactome" id="R-MMU-194002">
    <property type="pathway name" value="Glucocorticoid biosynthesis"/>
</dbReference>
<dbReference type="UniPathway" id="UPA00062"/>
<dbReference type="BioGRID-ORCS" id="15497">
    <property type="hits" value="3 hits in 78 CRISPR screens"/>
</dbReference>
<dbReference type="PRO" id="PR:O35469"/>
<dbReference type="Proteomes" id="UP000000589">
    <property type="component" value="Chromosome 3"/>
</dbReference>
<dbReference type="RNAct" id="O35469">
    <property type="molecule type" value="protein"/>
</dbReference>
<dbReference type="Bgee" id="ENSMUSG00000027869">
    <property type="expression patterns" value="Expressed in adrenal gland and 64 other cell types or tissues"/>
</dbReference>
<dbReference type="GO" id="GO:0005789">
    <property type="term" value="C:endoplasmic reticulum membrane"/>
    <property type="evidence" value="ECO:0007669"/>
    <property type="project" value="UniProtKB-SubCell"/>
</dbReference>
<dbReference type="GO" id="GO:0031966">
    <property type="term" value="C:mitochondrial membrane"/>
    <property type="evidence" value="ECO:0007669"/>
    <property type="project" value="UniProtKB-SubCell"/>
</dbReference>
<dbReference type="GO" id="GO:0003854">
    <property type="term" value="F:3-beta-hydroxy-Delta5-steroid dehydrogenase (NAD+) activity"/>
    <property type="evidence" value="ECO:0007669"/>
    <property type="project" value="UniProtKB-EC"/>
</dbReference>
<dbReference type="GO" id="GO:0004769">
    <property type="term" value="F:steroid Delta-isomerase activity"/>
    <property type="evidence" value="ECO:0007669"/>
    <property type="project" value="UniProtKB-EC"/>
</dbReference>
<dbReference type="GO" id="GO:0006694">
    <property type="term" value="P:steroid biosynthetic process"/>
    <property type="evidence" value="ECO:0007669"/>
    <property type="project" value="UniProtKB-UniPathway"/>
</dbReference>
<dbReference type="FunFam" id="3.40.50.720:FF:000220">
    <property type="entry name" value="3 beta-hydroxysteroid dehydrogenase/Delta 5--&gt;4-isomerase type 1"/>
    <property type="match status" value="1"/>
</dbReference>
<dbReference type="Gene3D" id="3.40.50.720">
    <property type="entry name" value="NAD(P)-binding Rossmann-like Domain"/>
    <property type="match status" value="1"/>
</dbReference>
<dbReference type="InterPro" id="IPR002225">
    <property type="entry name" value="3Beta_OHSteriod_DH/Estase"/>
</dbReference>
<dbReference type="InterPro" id="IPR050177">
    <property type="entry name" value="Lipid_A_modif_metabolic_enz"/>
</dbReference>
<dbReference type="InterPro" id="IPR036291">
    <property type="entry name" value="NAD(P)-bd_dom_sf"/>
</dbReference>
<dbReference type="PANTHER" id="PTHR43245">
    <property type="entry name" value="BIFUNCTIONAL POLYMYXIN RESISTANCE PROTEIN ARNA"/>
    <property type="match status" value="1"/>
</dbReference>
<dbReference type="PANTHER" id="PTHR43245:SF51">
    <property type="entry name" value="SHORT CHAIN DEHYDROGENASE_REDUCTASE FAMILY 42E, MEMBER 2"/>
    <property type="match status" value="1"/>
</dbReference>
<dbReference type="Pfam" id="PF01073">
    <property type="entry name" value="3Beta_HSD"/>
    <property type="match status" value="1"/>
</dbReference>
<dbReference type="SUPFAM" id="SSF51735">
    <property type="entry name" value="NAD(P)-binding Rossmann-fold domains"/>
    <property type="match status" value="1"/>
</dbReference>
<proteinExistence type="evidence at protein level"/>
<accession>O35469</accession>
<accession>Q3UQN7</accession>
<evidence type="ECO:0000250" key="1"/>
<evidence type="ECO:0000255" key="2"/>
<evidence type="ECO:0000305" key="3"/>
<name>3BHS6_MOUSE</name>
<organism>
    <name type="scientific">Mus musculus</name>
    <name type="common">Mouse</name>
    <dbReference type="NCBI Taxonomy" id="10090"/>
    <lineage>
        <taxon>Eukaryota</taxon>
        <taxon>Metazoa</taxon>
        <taxon>Chordata</taxon>
        <taxon>Craniata</taxon>
        <taxon>Vertebrata</taxon>
        <taxon>Euteleostomi</taxon>
        <taxon>Mammalia</taxon>
        <taxon>Eutheria</taxon>
        <taxon>Euarchontoglires</taxon>
        <taxon>Glires</taxon>
        <taxon>Rodentia</taxon>
        <taxon>Myomorpha</taxon>
        <taxon>Muroidea</taxon>
        <taxon>Muridae</taxon>
        <taxon>Murinae</taxon>
        <taxon>Mus</taxon>
        <taxon>Mus</taxon>
    </lineage>
</organism>
<feature type="chain" id="PRO_0000087785" description="3 beta-hydroxysteroid dehydrogenase/Delta 5--&gt;4-isomerase type 6">
    <location>
        <begin position="1"/>
        <end position="373"/>
    </location>
</feature>
<feature type="transmembrane region" description="Helical" evidence="2">
    <location>
        <begin position="288"/>
        <end position="308"/>
    </location>
</feature>
<feature type="active site" description="Proton acceptor" evidence="1">
    <location>
        <position position="155"/>
    </location>
</feature>
<feature type="binding site" evidence="1">
    <location>
        <position position="159"/>
    </location>
    <ligand>
        <name>NAD(+)</name>
        <dbReference type="ChEBI" id="CHEBI:57540"/>
    </ligand>
</feature>
<feature type="sequence conflict" description="In Ref. 1; AAB84299." evidence="3" ref="1">
    <original>Y</original>
    <variation>F</variation>
    <location>
        <position position="189"/>
    </location>
</feature>
<feature type="sequence conflict" description="In Ref. 1; AAB84299." evidence="3" ref="1">
    <original>E</original>
    <variation>A</variation>
    <location>
        <position position="366"/>
    </location>
</feature>
<feature type="sequence conflict" description="In Ref. 1; AAB84299." evidence="3" ref="1">
    <original>K</original>
    <variation>T</variation>
    <location>
        <position position="371"/>
    </location>
</feature>
<reference key="1">
    <citation type="journal article" date="1997" name="Endocrinology">
        <title>Isolation of a new mouse 3beta-hydroxysteroid dehydrogenase isoform, 3beta-HSD VI, expressed during early pregnancy.</title>
        <authorList>
            <person name="Abbaszade I.G."/>
            <person name="Arensburg J."/>
            <person name="Park C.-H.J."/>
            <person name="Kasa-Vubu J.Z."/>
            <person name="Orly J."/>
            <person name="Payne A.H."/>
        </authorList>
    </citation>
    <scope>NUCLEOTIDE SEQUENCE [MRNA]</scope>
    <source>
        <strain>C57BL/6J</strain>
    </source>
</reference>
<reference key="2">
    <citation type="journal article" date="2005" name="Science">
        <title>The transcriptional landscape of the mammalian genome.</title>
        <authorList>
            <person name="Carninci P."/>
            <person name="Kasukawa T."/>
            <person name="Katayama S."/>
            <person name="Gough J."/>
            <person name="Frith M.C."/>
            <person name="Maeda N."/>
            <person name="Oyama R."/>
            <person name="Ravasi T."/>
            <person name="Lenhard B."/>
            <person name="Wells C."/>
            <person name="Kodzius R."/>
            <person name="Shimokawa K."/>
            <person name="Bajic V.B."/>
            <person name="Brenner S.E."/>
            <person name="Batalov S."/>
            <person name="Forrest A.R."/>
            <person name="Zavolan M."/>
            <person name="Davis M.J."/>
            <person name="Wilming L.G."/>
            <person name="Aidinis V."/>
            <person name="Allen J.E."/>
            <person name="Ambesi-Impiombato A."/>
            <person name="Apweiler R."/>
            <person name="Aturaliya R.N."/>
            <person name="Bailey T.L."/>
            <person name="Bansal M."/>
            <person name="Baxter L."/>
            <person name="Beisel K.W."/>
            <person name="Bersano T."/>
            <person name="Bono H."/>
            <person name="Chalk A.M."/>
            <person name="Chiu K.P."/>
            <person name="Choudhary V."/>
            <person name="Christoffels A."/>
            <person name="Clutterbuck D.R."/>
            <person name="Crowe M.L."/>
            <person name="Dalla E."/>
            <person name="Dalrymple B.P."/>
            <person name="de Bono B."/>
            <person name="Della Gatta G."/>
            <person name="di Bernardo D."/>
            <person name="Down T."/>
            <person name="Engstrom P."/>
            <person name="Fagiolini M."/>
            <person name="Faulkner G."/>
            <person name="Fletcher C.F."/>
            <person name="Fukushima T."/>
            <person name="Furuno M."/>
            <person name="Futaki S."/>
            <person name="Gariboldi M."/>
            <person name="Georgii-Hemming P."/>
            <person name="Gingeras T.R."/>
            <person name="Gojobori T."/>
            <person name="Green R.E."/>
            <person name="Gustincich S."/>
            <person name="Harbers M."/>
            <person name="Hayashi Y."/>
            <person name="Hensch T.K."/>
            <person name="Hirokawa N."/>
            <person name="Hill D."/>
            <person name="Huminiecki L."/>
            <person name="Iacono M."/>
            <person name="Ikeo K."/>
            <person name="Iwama A."/>
            <person name="Ishikawa T."/>
            <person name="Jakt M."/>
            <person name="Kanapin A."/>
            <person name="Katoh M."/>
            <person name="Kawasawa Y."/>
            <person name="Kelso J."/>
            <person name="Kitamura H."/>
            <person name="Kitano H."/>
            <person name="Kollias G."/>
            <person name="Krishnan S.P."/>
            <person name="Kruger A."/>
            <person name="Kummerfeld S.K."/>
            <person name="Kurochkin I.V."/>
            <person name="Lareau L.F."/>
            <person name="Lazarevic D."/>
            <person name="Lipovich L."/>
            <person name="Liu J."/>
            <person name="Liuni S."/>
            <person name="McWilliam S."/>
            <person name="Madan Babu M."/>
            <person name="Madera M."/>
            <person name="Marchionni L."/>
            <person name="Matsuda H."/>
            <person name="Matsuzawa S."/>
            <person name="Miki H."/>
            <person name="Mignone F."/>
            <person name="Miyake S."/>
            <person name="Morris K."/>
            <person name="Mottagui-Tabar S."/>
            <person name="Mulder N."/>
            <person name="Nakano N."/>
            <person name="Nakauchi H."/>
            <person name="Ng P."/>
            <person name="Nilsson R."/>
            <person name="Nishiguchi S."/>
            <person name="Nishikawa S."/>
            <person name="Nori F."/>
            <person name="Ohara O."/>
            <person name="Okazaki Y."/>
            <person name="Orlando V."/>
            <person name="Pang K.C."/>
            <person name="Pavan W.J."/>
            <person name="Pavesi G."/>
            <person name="Pesole G."/>
            <person name="Petrovsky N."/>
            <person name="Piazza S."/>
            <person name="Reed J."/>
            <person name="Reid J.F."/>
            <person name="Ring B.Z."/>
            <person name="Ringwald M."/>
            <person name="Rost B."/>
            <person name="Ruan Y."/>
            <person name="Salzberg S.L."/>
            <person name="Sandelin A."/>
            <person name="Schneider C."/>
            <person name="Schoenbach C."/>
            <person name="Sekiguchi K."/>
            <person name="Semple C.A."/>
            <person name="Seno S."/>
            <person name="Sessa L."/>
            <person name="Sheng Y."/>
            <person name="Shibata Y."/>
            <person name="Shimada H."/>
            <person name="Shimada K."/>
            <person name="Silva D."/>
            <person name="Sinclair B."/>
            <person name="Sperling S."/>
            <person name="Stupka E."/>
            <person name="Sugiura K."/>
            <person name="Sultana R."/>
            <person name="Takenaka Y."/>
            <person name="Taki K."/>
            <person name="Tammoja K."/>
            <person name="Tan S.L."/>
            <person name="Tang S."/>
            <person name="Taylor M.S."/>
            <person name="Tegner J."/>
            <person name="Teichmann S.A."/>
            <person name="Ueda H.R."/>
            <person name="van Nimwegen E."/>
            <person name="Verardo R."/>
            <person name="Wei C.L."/>
            <person name="Yagi K."/>
            <person name="Yamanishi H."/>
            <person name="Zabarovsky E."/>
            <person name="Zhu S."/>
            <person name="Zimmer A."/>
            <person name="Hide W."/>
            <person name="Bult C."/>
            <person name="Grimmond S.M."/>
            <person name="Teasdale R.D."/>
            <person name="Liu E.T."/>
            <person name="Brusic V."/>
            <person name="Quackenbush J."/>
            <person name="Wahlestedt C."/>
            <person name="Mattick J.S."/>
            <person name="Hume D.A."/>
            <person name="Kai C."/>
            <person name="Sasaki D."/>
            <person name="Tomaru Y."/>
            <person name="Fukuda S."/>
            <person name="Kanamori-Katayama M."/>
            <person name="Suzuki M."/>
            <person name="Aoki J."/>
            <person name="Arakawa T."/>
            <person name="Iida J."/>
            <person name="Imamura K."/>
            <person name="Itoh M."/>
            <person name="Kato T."/>
            <person name="Kawaji H."/>
            <person name="Kawagashira N."/>
            <person name="Kawashima T."/>
            <person name="Kojima M."/>
            <person name="Kondo S."/>
            <person name="Konno H."/>
            <person name="Nakano K."/>
            <person name="Ninomiya N."/>
            <person name="Nishio T."/>
            <person name="Okada M."/>
            <person name="Plessy C."/>
            <person name="Shibata K."/>
            <person name="Shiraki T."/>
            <person name="Suzuki S."/>
            <person name="Tagami M."/>
            <person name="Waki K."/>
            <person name="Watahiki A."/>
            <person name="Okamura-Oho Y."/>
            <person name="Suzuki H."/>
            <person name="Kawai J."/>
            <person name="Hayashizaki Y."/>
        </authorList>
    </citation>
    <scope>NUCLEOTIDE SEQUENCE [LARGE SCALE MRNA]</scope>
    <source>
        <strain>C57BL/6J</strain>
        <tissue>Heart</tissue>
    </source>
</reference>
<reference key="3">
    <citation type="journal article" date="2009" name="PLoS Biol.">
        <title>Lineage-specific biology revealed by a finished genome assembly of the mouse.</title>
        <authorList>
            <person name="Church D.M."/>
            <person name="Goodstadt L."/>
            <person name="Hillier L.W."/>
            <person name="Zody M.C."/>
            <person name="Goldstein S."/>
            <person name="She X."/>
            <person name="Bult C.J."/>
            <person name="Agarwala R."/>
            <person name="Cherry J.L."/>
            <person name="DiCuccio M."/>
            <person name="Hlavina W."/>
            <person name="Kapustin Y."/>
            <person name="Meric P."/>
            <person name="Maglott D."/>
            <person name="Birtle Z."/>
            <person name="Marques A.C."/>
            <person name="Graves T."/>
            <person name="Zhou S."/>
            <person name="Teague B."/>
            <person name="Potamousis K."/>
            <person name="Churas C."/>
            <person name="Place M."/>
            <person name="Herschleb J."/>
            <person name="Runnheim R."/>
            <person name="Forrest D."/>
            <person name="Amos-Landgraf J."/>
            <person name="Schwartz D.C."/>
            <person name="Cheng Z."/>
            <person name="Lindblad-Toh K."/>
            <person name="Eichler E.E."/>
            <person name="Ponting C.P."/>
        </authorList>
    </citation>
    <scope>NUCLEOTIDE SEQUENCE [LARGE SCALE GENOMIC DNA]</scope>
    <source>
        <strain>C57BL/6J</strain>
    </source>
</reference>
<reference key="4">
    <citation type="submission" date="2005-07" db="EMBL/GenBank/DDBJ databases">
        <authorList>
            <person name="Mural R.J."/>
            <person name="Adams M.D."/>
            <person name="Myers E.W."/>
            <person name="Smith H.O."/>
            <person name="Venter J.C."/>
        </authorList>
    </citation>
    <scope>NUCLEOTIDE SEQUENCE [LARGE SCALE GENOMIC DNA]</scope>
</reference>
<reference key="5">
    <citation type="journal article" date="2010" name="Cell">
        <title>A tissue-specific atlas of mouse protein phosphorylation and expression.</title>
        <authorList>
            <person name="Huttlin E.L."/>
            <person name="Jedrychowski M.P."/>
            <person name="Elias J.E."/>
            <person name="Goswami T."/>
            <person name="Rad R."/>
            <person name="Beausoleil S.A."/>
            <person name="Villen J."/>
            <person name="Haas W."/>
            <person name="Sowa M.E."/>
            <person name="Gygi S.P."/>
        </authorList>
    </citation>
    <scope>IDENTIFICATION BY MASS SPECTROMETRY [LARGE SCALE ANALYSIS]</scope>
    <source>
        <tissue>Testis</tissue>
    </source>
</reference>
<keyword id="KW-0256">Endoplasmic reticulum</keyword>
<keyword id="KW-0413">Isomerase</keyword>
<keyword id="KW-0472">Membrane</keyword>
<keyword id="KW-0496">Mitochondrion</keyword>
<keyword id="KW-0511">Multifunctional enzyme</keyword>
<keyword id="KW-0520">NAD</keyword>
<keyword id="KW-0560">Oxidoreductase</keyword>
<keyword id="KW-1185">Reference proteome</keyword>
<keyword id="KW-0755">Steroidogenesis</keyword>
<keyword id="KW-0812">Transmembrane</keyword>
<keyword id="KW-1133">Transmembrane helix</keyword>
<comment type="function">
    <text>3-beta-HSD is a bifunctional enzyme, that catalyzes the oxidative conversion of Delta(5)-ene-3-beta-hydroxy steroid, and the oxidative conversion of ketosteroids. The 3-beta-HSD enzymatic system plays a crucial role in the biosynthesis of all classes of hormonal steroids. May be involved in local production of progesterone.</text>
</comment>
<comment type="catalytic activity">
    <reaction>
        <text>a 3beta-hydroxy-Delta(5)-steroid + NAD(+) = a 3-oxo-Delta(5)-steroid + NADH + H(+)</text>
        <dbReference type="Rhea" id="RHEA:24076"/>
        <dbReference type="ChEBI" id="CHEBI:1722"/>
        <dbReference type="ChEBI" id="CHEBI:15378"/>
        <dbReference type="ChEBI" id="CHEBI:47907"/>
        <dbReference type="ChEBI" id="CHEBI:57540"/>
        <dbReference type="ChEBI" id="CHEBI:57945"/>
        <dbReference type="EC" id="1.1.1.145"/>
    </reaction>
</comment>
<comment type="catalytic activity">
    <reaction>
        <text>a 3-oxo-Delta(5)-steroid = a 3-oxo-Delta(4)-steroid</text>
        <dbReference type="Rhea" id="RHEA:14709"/>
        <dbReference type="ChEBI" id="CHEBI:47907"/>
        <dbReference type="ChEBI" id="CHEBI:47909"/>
        <dbReference type="EC" id="5.3.3.1"/>
    </reaction>
</comment>
<comment type="pathway">
    <text>Lipid metabolism; steroid biosynthesis.</text>
</comment>
<comment type="subcellular location">
    <subcellularLocation>
        <location>Endoplasmic reticulum membrane</location>
        <topology>Single-pass membrane protein</topology>
    </subcellularLocation>
    <subcellularLocation>
        <location>Mitochondrion membrane</location>
        <topology>Single-pass membrane protein</topology>
    </subcellularLocation>
</comment>
<comment type="tissue specificity">
    <text>Expressed in skin and testis.</text>
</comment>
<comment type="developmental stage">
    <text>Earliest isoform to be expressed during embryogenesis in cells of embryonic origin at 7 and 9.5 dpc, and is the major isoform expressed in uterine tissue at the time of implantation (4.5 dpc) and continues to be expressed in uterine tissue at 6.5, 7.5 and 9.5 dpc. It is expressed in giant trophoblasts at 9.5 dpc and is expressed in the placenta through 15.5 dpc.</text>
</comment>
<comment type="similarity">
    <text evidence="3">Belongs to the 3-beta-HSD family.</text>
</comment>
<protein>
    <recommendedName>
        <fullName>3 beta-hydroxysteroid dehydrogenase/Delta 5--&gt;4-isomerase type 6</fullName>
        <ecNumber>1.1.1.-</ecNumber>
    </recommendedName>
    <alternativeName>
        <fullName>3 beta-hydroxysteroid dehydrogenase/Delta 5--&gt;4-isomerase type VI</fullName>
        <shortName>3-beta-HSD VI</shortName>
    </alternativeName>
    <domain>
        <recommendedName>
            <fullName>3-beta-hydroxy-Delta(5)-steroid dehydrogenase</fullName>
            <ecNumber>1.1.1.145</ecNumber>
        </recommendedName>
        <alternativeName>
            <fullName>3-beta-hydroxy-5-ene steroid dehydrogenase</fullName>
        </alternativeName>
        <alternativeName>
            <fullName>Progesterone reductase</fullName>
        </alternativeName>
    </domain>
    <domain>
        <recommendedName>
            <fullName>Steroid Delta-isomerase</fullName>
            <ecNumber>5.3.3.1</ecNumber>
        </recommendedName>
        <alternativeName>
            <fullName>Delta-5-3-ketosteroid isomerase</fullName>
        </alternativeName>
    </domain>
</protein>
<sequence length="373" mass="41977">MPGWSCLVTGAGGFLGQRIVQLLMQEKDLEEIRVLDKFFRPETREQFFNLDTNIKVTVLEGDILDTQYLRKACQGISVVIHTAAVIDVTGVIPRQTILDVNLKGTQNLLEACIQASVPAFIFSSSVDVAGPNSYKEIILNGNEEEHHESIWSDPYPYSKKMAEKAVLAANGSMLKIGGTLHTCALRPMYIYGERSPFISNTIITALKNKNILGCTGKFSTANPVYVGNVAWAHILAARGLRDPKKSPNIQGEFYYISDDTPHQSYDDLNYTLSKEWGFCPDSSWSLPVPLLYWLAFMLETVSFLLSPIYRFIPPFNRHLVTLTGSTFTFSYKKAQRDLGYEPLVSWEEAKQKTSEWIGTLVEQHRETLDTKSQ</sequence>